<evidence type="ECO:0000255" key="1"/>
<evidence type="ECO:0000269" key="2">
    <source>
    </source>
</evidence>
<evidence type="ECO:0000269" key="3">
    <source>
    </source>
</evidence>
<evidence type="ECO:0000269" key="4">
    <source>
    </source>
</evidence>
<evidence type="ECO:0000269" key="5">
    <source>
    </source>
</evidence>
<evidence type="ECO:0000305" key="6"/>
<evidence type="ECO:0000305" key="7">
    <source>
    </source>
</evidence>
<protein>
    <recommendedName>
        <fullName evidence="7">Dol-P-Man:Man(7)GlcNAc(2)-PP-Dol alpha-1,6-mannosyltransferase</fullName>
        <ecNumber evidence="5">2.4.1.260</ecNumber>
    </recommendedName>
    <alternativeName>
        <fullName>Asparagine-linked glycosylation protein 12</fullName>
    </alternativeName>
    <alternativeName>
        <fullName>Dolichyl-P-Man:Man(7)GlcNAc(2)-PP-dolichyl-alpha-1,6-mannosyltransferase</fullName>
    </alternativeName>
    <alternativeName>
        <fullName>Extracellular mutant protein 39</fullName>
    </alternativeName>
    <alternativeName>
        <fullName>Mannosyltransferase ALG12</fullName>
    </alternativeName>
</protein>
<name>ALG12_YEAST</name>
<proteinExistence type="evidence at protein level"/>
<dbReference type="EC" id="2.4.1.260" evidence="5"/>
<dbReference type="EMBL" id="Z71645">
    <property type="protein sequence ID" value="CAA96310.1"/>
    <property type="molecule type" value="Genomic_DNA"/>
</dbReference>
<dbReference type="EMBL" id="AY692956">
    <property type="protein sequence ID" value="AAT92975.1"/>
    <property type="molecule type" value="Genomic_DNA"/>
</dbReference>
<dbReference type="EMBL" id="BK006947">
    <property type="protein sequence ID" value="DAA10570.1"/>
    <property type="molecule type" value="Genomic_DNA"/>
</dbReference>
<dbReference type="PIR" id="S63361">
    <property type="entry name" value="S63361"/>
</dbReference>
<dbReference type="RefSeq" id="NP_014427.1">
    <property type="nucleotide sequence ID" value="NM_001183207.1"/>
</dbReference>
<dbReference type="BioGRID" id="35854">
    <property type="interactions" value="121"/>
</dbReference>
<dbReference type="DIP" id="DIP-4259N"/>
<dbReference type="FunCoup" id="P53730">
    <property type="interactions" value="470"/>
</dbReference>
<dbReference type="IntAct" id="P53730">
    <property type="interactions" value="23"/>
</dbReference>
<dbReference type="MINT" id="P53730"/>
<dbReference type="STRING" id="4932.YNR030W"/>
<dbReference type="CAZy" id="GT22">
    <property type="family name" value="Glycosyltransferase Family 22"/>
</dbReference>
<dbReference type="PaxDb" id="4932-YNR030W"/>
<dbReference type="PeptideAtlas" id="P53730"/>
<dbReference type="EnsemblFungi" id="YNR030W_mRNA">
    <property type="protein sequence ID" value="YNR030W"/>
    <property type="gene ID" value="YNR030W"/>
</dbReference>
<dbReference type="GeneID" id="855764"/>
<dbReference type="KEGG" id="sce:YNR030W"/>
<dbReference type="AGR" id="SGD:S000005313"/>
<dbReference type="SGD" id="S000005313">
    <property type="gene designation" value="ALG12"/>
</dbReference>
<dbReference type="VEuPathDB" id="FungiDB:YNR030W"/>
<dbReference type="eggNOG" id="KOG2516">
    <property type="taxonomic scope" value="Eukaryota"/>
</dbReference>
<dbReference type="GeneTree" id="ENSGT00950000183090"/>
<dbReference type="HOGENOM" id="CLU_008917_4_0_1"/>
<dbReference type="InParanoid" id="P53730"/>
<dbReference type="OMA" id="WWVEVRM"/>
<dbReference type="OrthoDB" id="19039at2759"/>
<dbReference type="BioCyc" id="MetaCyc:MONOMER3O-256"/>
<dbReference type="BioCyc" id="YEAST:MONOMER3O-256"/>
<dbReference type="BRENDA" id="2.4.1.260">
    <property type="organism ID" value="984"/>
</dbReference>
<dbReference type="Reactome" id="R-SCE-446193">
    <property type="pathway name" value="Biosynthesis of the N-glycan precursor (dolichol lipid-linked oligosaccharide, LLO) and transfer to a nascent protein"/>
</dbReference>
<dbReference type="UniPathway" id="UPA00378"/>
<dbReference type="BioGRID-ORCS" id="855764">
    <property type="hits" value="2 hits in 10 CRISPR screens"/>
</dbReference>
<dbReference type="PRO" id="PR:P53730"/>
<dbReference type="Proteomes" id="UP000002311">
    <property type="component" value="Chromosome XIV"/>
</dbReference>
<dbReference type="RNAct" id="P53730">
    <property type="molecule type" value="protein"/>
</dbReference>
<dbReference type="GO" id="GO:0005783">
    <property type="term" value="C:endoplasmic reticulum"/>
    <property type="evidence" value="ECO:0007005"/>
    <property type="project" value="SGD"/>
</dbReference>
<dbReference type="GO" id="GO:0005789">
    <property type="term" value="C:endoplasmic reticulum membrane"/>
    <property type="evidence" value="ECO:0000318"/>
    <property type="project" value="GO_Central"/>
</dbReference>
<dbReference type="GO" id="GO:0000009">
    <property type="term" value="F:alpha-1,6-mannosyltransferase activity"/>
    <property type="evidence" value="ECO:0000315"/>
    <property type="project" value="SGD"/>
</dbReference>
<dbReference type="GO" id="GO:0052917">
    <property type="term" value="F:dolichyl-P-Man:Man(7)GlcNAc(2)-PP-dolichol alpha-1,6-mannosyltransferase"/>
    <property type="evidence" value="ECO:0000315"/>
    <property type="project" value="FlyBase"/>
</dbReference>
<dbReference type="GO" id="GO:0006488">
    <property type="term" value="P:dolichol-linked oligosaccharide biosynthetic process"/>
    <property type="evidence" value="ECO:0000315"/>
    <property type="project" value="SGD"/>
</dbReference>
<dbReference type="GO" id="GO:0006486">
    <property type="term" value="P:protein glycosylation"/>
    <property type="evidence" value="ECO:0000315"/>
    <property type="project" value="SGD"/>
</dbReference>
<dbReference type="GO" id="GO:0006487">
    <property type="term" value="P:protein N-linked glycosylation"/>
    <property type="evidence" value="ECO:0000318"/>
    <property type="project" value="GO_Central"/>
</dbReference>
<dbReference type="InterPro" id="IPR005599">
    <property type="entry name" value="GPI_mannosylTrfase"/>
</dbReference>
<dbReference type="PANTHER" id="PTHR22760:SF1">
    <property type="entry name" value="DOL-P-MAN:MAN(7)GLCNAC(2)-PP-DOL ALPHA-1,6-MANNOSYLTRANSFERASE"/>
    <property type="match status" value="1"/>
</dbReference>
<dbReference type="PANTHER" id="PTHR22760">
    <property type="entry name" value="GLYCOSYLTRANSFERASE"/>
    <property type="match status" value="1"/>
</dbReference>
<dbReference type="Pfam" id="PF03901">
    <property type="entry name" value="Glyco_transf_22"/>
    <property type="match status" value="1"/>
</dbReference>
<sequence>MRWSVLDTVLLTVISFHLIQAPFTKVEESFNIQAIHDILTYSVFDISQYDHLKFPGVVPRTFVGAVIIAMLSRPYLYLSSLIQTSRPTSIDVQLVVRGIVGLTNGLSFIYLKNCLQDMFDEITEKKKEENEDKDIYIYDSAGTWFLLFLIGSFHLMFYSTRTLPNFVMTLPLTNVALGWVLLGRYNAAIFLSALVAIVFRLEVSALSAGIALFSVIFKKISLFDAIKFGIFGLGLGSAISITVDSYFWQEWCLPEVDGFLFNVVAGYASKWGVEPVTAYFTHYLRMMFMPPTVLLLNYFGYKLAPAKLKIVSLASLFHIIVLSFQPHKEWRFIIYAVPSIMLLGATGAAHLWENMKVKKITNVLCLAILPLSIMTSFFISMAFLYISRMNYPGGEALTSFNDMIVEKNITNATVHISIPPCMTGVTLFGELNYGVYGINYDKTENTTLLQEMWPSFDFLITHEPTASQLPFENKTTNHWELVNTTKMFTGFDPTYIKNFVFQERVNVLSLLKQIIFDKTPTVFLKELTANSIVKSDVFFTYKRIKQDEKTD</sequence>
<feature type="chain" id="PRO_0000215786" description="Dol-P-Man:Man(7)GlcNAc(2)-PP-Dol alpha-1,6-mannosyltransferase">
    <location>
        <begin position="1"/>
        <end position="551"/>
    </location>
</feature>
<feature type="topological domain" description="Lumenal" evidence="1">
    <location>
        <begin position="1"/>
        <end position="2"/>
    </location>
</feature>
<feature type="transmembrane region" description="Helical" evidence="1">
    <location>
        <begin position="3"/>
        <end position="23"/>
    </location>
</feature>
<feature type="topological domain" description="Cytoplasmic" evidence="1">
    <location>
        <begin position="24"/>
        <end position="61"/>
    </location>
</feature>
<feature type="transmembrane region" description="Helical" evidence="1">
    <location>
        <begin position="62"/>
        <end position="82"/>
    </location>
</feature>
<feature type="topological domain" description="Lumenal" evidence="1">
    <location>
        <begin position="83"/>
        <end position="89"/>
    </location>
</feature>
<feature type="transmembrane region" description="Helical" evidence="1">
    <location>
        <begin position="90"/>
        <end position="110"/>
    </location>
</feature>
<feature type="topological domain" description="Cytoplasmic" evidence="1">
    <location>
        <begin position="111"/>
        <end position="136"/>
    </location>
</feature>
<feature type="transmembrane region" description="Helical" evidence="1">
    <location>
        <begin position="137"/>
        <end position="157"/>
    </location>
</feature>
<feature type="topological domain" description="Lumenal" evidence="1">
    <location>
        <begin position="158"/>
        <end position="178"/>
    </location>
</feature>
<feature type="transmembrane region" description="Helical" evidence="1">
    <location>
        <begin position="179"/>
        <end position="199"/>
    </location>
</feature>
<feature type="topological domain" description="Cytoplasmic" evidence="1">
    <location>
        <begin position="200"/>
        <end position="202"/>
    </location>
</feature>
<feature type="transmembrane region" description="Helical" evidence="1">
    <location>
        <begin position="203"/>
        <end position="223"/>
    </location>
</feature>
<feature type="topological domain" description="Lumenal" evidence="1">
    <location>
        <begin position="224"/>
        <end position="227"/>
    </location>
</feature>
<feature type="transmembrane region" description="Helical" evidence="1">
    <location>
        <begin position="228"/>
        <end position="248"/>
    </location>
</feature>
<feature type="topological domain" description="Cytoplasmic" evidence="1">
    <location>
        <begin position="249"/>
        <end position="275"/>
    </location>
</feature>
<feature type="transmembrane region" description="Helical" evidence="1">
    <location>
        <begin position="276"/>
        <end position="296"/>
    </location>
</feature>
<feature type="topological domain" description="Lumenal" evidence="1">
    <location>
        <begin position="297"/>
        <end position="303"/>
    </location>
</feature>
<feature type="transmembrane region" description="Helical" evidence="1">
    <location>
        <begin position="304"/>
        <end position="324"/>
    </location>
</feature>
<feature type="topological domain" description="Cytoplasmic" evidence="1">
    <location>
        <begin position="325"/>
        <end position="331"/>
    </location>
</feature>
<feature type="transmembrane region" description="Helical" evidence="1">
    <location>
        <begin position="332"/>
        <end position="352"/>
    </location>
</feature>
<feature type="topological domain" description="Lumenal" evidence="1">
    <location>
        <begin position="353"/>
        <end position="365"/>
    </location>
</feature>
<feature type="transmembrane region" description="Helical" evidence="1">
    <location>
        <begin position="366"/>
        <end position="386"/>
    </location>
</feature>
<feature type="topological domain" description="Cytoplasmic" evidence="1">
    <location>
        <begin position="387"/>
        <end position="417"/>
    </location>
</feature>
<feature type="transmembrane region" description="Helical" evidence="1">
    <location>
        <begin position="418"/>
        <end position="438"/>
    </location>
</feature>
<feature type="topological domain" description="Lumenal" evidence="1">
    <location>
        <begin position="439"/>
        <end position="551"/>
    </location>
</feature>
<keyword id="KW-0256">Endoplasmic reticulum</keyword>
<keyword id="KW-0328">Glycosyltransferase</keyword>
<keyword id="KW-0472">Membrane</keyword>
<keyword id="KW-1185">Reference proteome</keyword>
<keyword id="KW-0808">Transferase</keyword>
<keyword id="KW-0812">Transmembrane</keyword>
<keyword id="KW-1133">Transmembrane helix</keyword>
<comment type="function">
    <text evidence="2 5">Mannosyltransferase that operates in the biosynthetic pathway of dolichol-linked oligosaccharides, the glycan precursors employed in protein asparagine (N)-glycosylation. The assembly of dolichol-linked oligosaccharides begins on the cytosolic side of the endoplasmic reticulum membrane and finishes in its lumen. The sequential addition of sugars to dolichol pyrophosphate produces dolichol-linked oligosaccharides containing fourteen sugars, including two GlcNAcs, nine mannoses and three glucoses. Once assembled, the oligosaccharide is transferred from the lipid to nascent proteins by oligosaccharyltransferases. In the lumen of the endoplasmic reticulum, adds the eighth mannose residue in an alpha-1,6 linkage onto Man(7)GlcNAc(2)-PP-dolichol to produce Man(8)GlcNAc(2)-PP-dolichol.</text>
</comment>
<comment type="catalytic activity">
    <reaction evidence="5">
        <text>an alpha-D-Man-(1-&gt;2)-alpha-D-Man-(1-&gt;2)-alpha-D-Man-(1-&gt;3)-[alpha-D-Man-(1-&gt;2)-alpha-D-Man-(1-&gt;3)-alpha-D-Man-(1-&gt;6)]-beta-D-Man-(1-&gt;4)-beta-D-GlcNAc-(1-&gt;4)-alpha-D-GlcNAc-diphospho-di-trans,poly-cis-dolichol + a di-trans,poly-cis-dolichyl beta-D-mannosyl phosphate = an alpha-D-Man-(1-&gt;2)-alpha-D-Man-(1-&gt;2)-alpha-D-Man-(1-&gt;3)-[alpha-D-Man-(1-&gt;2)-alpha-D-Man-(1-&gt;3)-[alpha-D-Man-(1-&gt;6)]-alpha-D-Man-(1-&gt;6)]-beta-D-Man-(1-&gt;4)-beta-D-GlcNAc-(1-&gt;4)-alpha-D-GlcNAc-diphospho-di-trans,poly-cis-dolichol + a di-trans,poly-cis-dolichyl phosphate + H(+)</text>
        <dbReference type="Rhea" id="RHEA:29535"/>
        <dbReference type="Rhea" id="RHEA-COMP:19498"/>
        <dbReference type="Rhea" id="RHEA-COMP:19501"/>
        <dbReference type="Rhea" id="RHEA-COMP:19518"/>
        <dbReference type="Rhea" id="RHEA-COMP:19519"/>
        <dbReference type="ChEBI" id="CHEBI:15378"/>
        <dbReference type="ChEBI" id="CHEBI:57683"/>
        <dbReference type="ChEBI" id="CHEBI:58211"/>
        <dbReference type="ChEBI" id="CHEBI:132517"/>
        <dbReference type="ChEBI" id="CHEBI:132519"/>
        <dbReference type="EC" id="2.4.1.260"/>
    </reaction>
    <physiologicalReaction direction="left-to-right" evidence="7">
        <dbReference type="Rhea" id="RHEA:29536"/>
    </physiologicalReaction>
</comment>
<comment type="pathway">
    <text evidence="5">Protein modification; protein glycosylation.</text>
</comment>
<comment type="subcellular location">
    <subcellularLocation>
        <location evidence="3">Endoplasmic reticulum membrane</location>
        <topology evidence="1">Multi-pass membrane protein</topology>
    </subcellularLocation>
</comment>
<comment type="miscellaneous">
    <text evidence="4">Present with 3550 molecules/cell in log phase SD medium.</text>
</comment>
<comment type="similarity">
    <text evidence="6">Belongs to the glycosyltransferase 22 family.</text>
</comment>
<gene>
    <name type="primary">ALG12</name>
    <name type="synonym">ECM39</name>
    <name type="ordered locus">YNR030W</name>
    <name type="ORF">N3265</name>
</gene>
<reference key="1">
    <citation type="journal article" date="1997" name="Nature">
        <title>The nucleotide sequence of Saccharomyces cerevisiae chromosome XIV and its evolutionary implications.</title>
        <authorList>
            <person name="Philippsen P."/>
            <person name="Kleine K."/>
            <person name="Poehlmann R."/>
            <person name="Duesterhoeft A."/>
            <person name="Hamberg K."/>
            <person name="Hegemann J.H."/>
            <person name="Obermaier B."/>
            <person name="Urrestarazu L.A."/>
            <person name="Aert R."/>
            <person name="Albermann K."/>
            <person name="Altmann R."/>
            <person name="Andre B."/>
            <person name="Baladron V."/>
            <person name="Ballesta J.P.G."/>
            <person name="Becam A.-M."/>
            <person name="Beinhauer J.D."/>
            <person name="Boskovic J."/>
            <person name="Buitrago M.J."/>
            <person name="Bussereau F."/>
            <person name="Coster F."/>
            <person name="Crouzet M."/>
            <person name="D'Angelo M."/>
            <person name="Dal Pero F."/>
            <person name="De Antoni A."/>
            <person name="del Rey F."/>
            <person name="Doignon F."/>
            <person name="Domdey H."/>
            <person name="Dubois E."/>
            <person name="Fiedler T.A."/>
            <person name="Fleig U."/>
            <person name="Floeth M."/>
            <person name="Fritz C."/>
            <person name="Gaillardin C."/>
            <person name="Garcia-Cantalejo J.M."/>
            <person name="Glansdorff N."/>
            <person name="Goffeau A."/>
            <person name="Gueldener U."/>
            <person name="Herbert C.J."/>
            <person name="Heumann K."/>
            <person name="Heuss-Neitzel D."/>
            <person name="Hilbert H."/>
            <person name="Hinni K."/>
            <person name="Iraqui Houssaini I."/>
            <person name="Jacquet M."/>
            <person name="Jimenez A."/>
            <person name="Jonniaux J.-L."/>
            <person name="Karpfinger-Hartl L."/>
            <person name="Lanfranchi G."/>
            <person name="Lepingle A."/>
            <person name="Levesque H."/>
            <person name="Lyck R."/>
            <person name="Maftahi M."/>
            <person name="Mallet L."/>
            <person name="Maurer C.T.C."/>
            <person name="Messenguy F."/>
            <person name="Mewes H.-W."/>
            <person name="Moestl D."/>
            <person name="Nasr F."/>
            <person name="Nicaud J.-M."/>
            <person name="Niedenthal R.K."/>
            <person name="Pandolfo D."/>
            <person name="Pierard A."/>
            <person name="Piravandi E."/>
            <person name="Planta R.J."/>
            <person name="Pohl T.M."/>
            <person name="Purnelle B."/>
            <person name="Rebischung C."/>
            <person name="Remacha M.A."/>
            <person name="Revuelta J.L."/>
            <person name="Rinke M."/>
            <person name="Saiz J.E."/>
            <person name="Sartorello F."/>
            <person name="Scherens B."/>
            <person name="Sen-Gupta M."/>
            <person name="Soler-Mira A."/>
            <person name="Urbanus J.H.M."/>
            <person name="Valle G."/>
            <person name="Van Dyck L."/>
            <person name="Verhasselt P."/>
            <person name="Vierendeels F."/>
            <person name="Vissers S."/>
            <person name="Voet M."/>
            <person name="Volckaert G."/>
            <person name="Wach A."/>
            <person name="Wambutt R."/>
            <person name="Wedler H."/>
            <person name="Zollner A."/>
            <person name="Hani J."/>
        </authorList>
    </citation>
    <scope>NUCLEOTIDE SEQUENCE [LARGE SCALE GENOMIC DNA]</scope>
    <source>
        <strain>ATCC 204508 / S288c</strain>
    </source>
</reference>
<reference key="2">
    <citation type="journal article" date="2005" name="Glycobiology">
        <title>ALG9 mannosyltransferase is involved in two different steps of lipid-linked oligosaccharide biosynthesis.</title>
        <authorList>
            <person name="Frank C.G."/>
            <person name="Aebi M."/>
        </authorList>
    </citation>
    <scope>FUNCTION</scope>
    <scope>CATALYTIC ACTIVITY</scope>
    <scope>SUBSTRATE SPECIFICITY</scope>
</reference>
<reference key="3">
    <citation type="journal article" date="2014" name="G3 (Bethesda)">
        <title>The reference genome sequence of Saccharomyces cerevisiae: Then and now.</title>
        <authorList>
            <person name="Engel S.R."/>
            <person name="Dietrich F.S."/>
            <person name="Fisk D.G."/>
            <person name="Binkley G."/>
            <person name="Balakrishnan R."/>
            <person name="Costanzo M.C."/>
            <person name="Dwight S.S."/>
            <person name="Hitz B.C."/>
            <person name="Karra K."/>
            <person name="Nash R.S."/>
            <person name="Weng S."/>
            <person name="Wong E.D."/>
            <person name="Lloyd P."/>
            <person name="Skrzypek M.S."/>
            <person name="Miyasato S.R."/>
            <person name="Simison M."/>
            <person name="Cherry J.M."/>
        </authorList>
    </citation>
    <scope>GENOME REANNOTATION</scope>
    <source>
        <strain>ATCC 204508 / S288c</strain>
    </source>
</reference>
<reference key="4">
    <citation type="journal article" date="2007" name="Genome Res.">
        <title>Approaching a complete repository of sequence-verified protein-encoding clones for Saccharomyces cerevisiae.</title>
        <authorList>
            <person name="Hu Y."/>
            <person name="Rolfs A."/>
            <person name="Bhullar B."/>
            <person name="Murthy T.V.S."/>
            <person name="Zhu C."/>
            <person name="Berger M.F."/>
            <person name="Camargo A.A."/>
            <person name="Kelley F."/>
            <person name="McCarron S."/>
            <person name="Jepson D."/>
            <person name="Richardson A."/>
            <person name="Raphael J."/>
            <person name="Moreira D."/>
            <person name="Taycher E."/>
            <person name="Zuo D."/>
            <person name="Mohr S."/>
            <person name="Kane M.F."/>
            <person name="Williamson J."/>
            <person name="Simpson A.J.G."/>
            <person name="Bulyk M.L."/>
            <person name="Harlow E."/>
            <person name="Marsischky G."/>
            <person name="Kolodner R.D."/>
            <person name="LaBaer J."/>
        </authorList>
    </citation>
    <scope>NUCLEOTIDE SEQUENCE [GENOMIC DNA]</scope>
    <source>
        <strain>ATCC 204508 / S288c</strain>
    </source>
</reference>
<reference key="5">
    <citation type="journal article" date="1999" name="Glycobiology">
        <title>Ordered assembly of the asymmetrically branched lipid-linked oligosaccharide in the endoplasmic reticulum is ensured by the substrate specificity of the individual glycosyltransferases.</title>
        <authorList>
            <person name="Burda P."/>
            <person name="Jakob C.A."/>
            <person name="Beinhauer J."/>
            <person name="Hegemann J.H."/>
            <person name="Aebi M."/>
        </authorList>
    </citation>
    <scope>FUNCTION</scope>
</reference>
<reference key="6">
    <citation type="journal article" date="2003" name="Nature">
        <title>Global analysis of protein localization in budding yeast.</title>
        <authorList>
            <person name="Huh W.-K."/>
            <person name="Falvo J.V."/>
            <person name="Gerke L.C."/>
            <person name="Carroll A.S."/>
            <person name="Howson R.W."/>
            <person name="Weissman J.S."/>
            <person name="O'Shea E.K."/>
        </authorList>
    </citation>
    <scope>SUBCELLULAR LOCATION [LARGE SCALE ANALYSIS]</scope>
</reference>
<reference key="7">
    <citation type="journal article" date="2003" name="Nature">
        <title>Global analysis of protein expression in yeast.</title>
        <authorList>
            <person name="Ghaemmaghami S."/>
            <person name="Huh W.-K."/>
            <person name="Bower K."/>
            <person name="Howson R.W."/>
            <person name="Belle A."/>
            <person name="Dephoure N."/>
            <person name="O'Shea E.K."/>
            <person name="Weissman J.S."/>
        </authorList>
    </citation>
    <scope>LEVEL OF PROTEIN EXPRESSION [LARGE SCALE ANALYSIS]</scope>
</reference>
<reference key="8">
    <citation type="journal article" date="2006" name="Proc. Natl. Acad. Sci. U.S.A.">
        <title>A global topology map of the Saccharomyces cerevisiae membrane proteome.</title>
        <authorList>
            <person name="Kim H."/>
            <person name="Melen K."/>
            <person name="Oesterberg M."/>
            <person name="von Heijne G."/>
        </authorList>
    </citation>
    <scope>TOPOLOGY [LARGE SCALE ANALYSIS]</scope>
    <source>
        <strain>ATCC 208353 / W303-1A</strain>
    </source>
</reference>
<accession>P53730</accession>
<accession>D6W1K4</accession>
<organism>
    <name type="scientific">Saccharomyces cerevisiae (strain ATCC 204508 / S288c)</name>
    <name type="common">Baker's yeast</name>
    <dbReference type="NCBI Taxonomy" id="559292"/>
    <lineage>
        <taxon>Eukaryota</taxon>
        <taxon>Fungi</taxon>
        <taxon>Dikarya</taxon>
        <taxon>Ascomycota</taxon>
        <taxon>Saccharomycotina</taxon>
        <taxon>Saccharomycetes</taxon>
        <taxon>Saccharomycetales</taxon>
        <taxon>Saccharomycetaceae</taxon>
        <taxon>Saccharomyces</taxon>
    </lineage>
</organism>